<proteinExistence type="evidence at protein level"/>
<organism>
    <name type="scientific">Haemophilus influenzae</name>
    <dbReference type="NCBI Taxonomy" id="727"/>
    <lineage>
        <taxon>Bacteria</taxon>
        <taxon>Pseudomonadati</taxon>
        <taxon>Pseudomonadota</taxon>
        <taxon>Gammaproteobacteria</taxon>
        <taxon>Pasteurellales</taxon>
        <taxon>Pasteurellaceae</taxon>
        <taxon>Haemophilus</taxon>
    </lineage>
</organism>
<comment type="function">
    <text>May be involved in iron uptake.</text>
</comment>
<comment type="subcellular location">
    <subcellularLocation>
        <location>Periplasm</location>
    </subcellularLocation>
</comment>
<comment type="induction">
    <text>By iron deprivation.</text>
</comment>
<accession>P35756</accession>
<dbReference type="GO" id="GO:0042597">
    <property type="term" value="C:periplasmic space"/>
    <property type="evidence" value="ECO:0007669"/>
    <property type="project" value="UniProtKB-SubCell"/>
</dbReference>
<reference key="1">
    <citation type="journal article" date="1992" name="J. Bacteriol.">
        <title>Identification of two iron-repressed periplasmic proteins in Haemophilus influenzae.</title>
        <authorList>
            <person name="Harkness R.E."/>
            <person name="Chong P."/>
            <person name="Klein M.H."/>
        </authorList>
    </citation>
    <scope>PROTEIN SEQUENCE</scope>
    <source>
        <strain>Eagan / 8358</strain>
    </source>
</reference>
<sequence>KFKVVTTFTVIQDIAQNVAGDAAT</sequence>
<name>IR31_HAEIF</name>
<feature type="chain" id="PRO_0000084227" description="Iron-regulated 31 kDa protein">
    <location>
        <begin position="1"/>
        <end position="24" status="greater than"/>
    </location>
</feature>
<feature type="non-terminal residue">
    <location>
        <position position="24"/>
    </location>
</feature>
<keyword id="KW-0903">Direct protein sequencing</keyword>
<keyword id="KW-0408">Iron</keyword>
<keyword id="KW-0574">Periplasm</keyword>
<protein>
    <recommendedName>
        <fullName>Iron-regulated 31 kDa protein</fullName>
    </recommendedName>
</protein>